<evidence type="ECO:0000250" key="1"/>
<evidence type="ECO:0000256" key="2">
    <source>
        <dbReference type="SAM" id="MobiDB-lite"/>
    </source>
</evidence>
<evidence type="ECO:0000305" key="3"/>
<sequence>WYSSMFAANIKQEPISHHNHHHHHHHGHHQHQQRHNSNSNASSPHQSPLPNLQLEQYLKQQQQQPLMWSGLPNPMQTIMPANMRPSPTAATAATTTELCAPTTTVAAIAMQANDKLQALTPPMDVTPPKSPAKSQQSCAEPEKEHDLMSNSSEDMKYMA</sequence>
<dbReference type="EMBL" id="U93022">
    <property type="protein sequence ID" value="AAC03270.1"/>
    <property type="molecule type" value="Genomic_DNA"/>
</dbReference>
<dbReference type="EMBL" id="U93023">
    <property type="protein sequence ID" value="AAC03271.1"/>
    <property type="molecule type" value="Genomic_DNA"/>
</dbReference>
<dbReference type="GO" id="GO:0005634">
    <property type="term" value="C:nucleus"/>
    <property type="evidence" value="ECO:0007669"/>
    <property type="project" value="UniProtKB-SubCell"/>
</dbReference>
<dbReference type="GO" id="GO:0003677">
    <property type="term" value="F:DNA binding"/>
    <property type="evidence" value="ECO:0007669"/>
    <property type="project" value="UniProtKB-KW"/>
</dbReference>
<dbReference type="GO" id="GO:0008270">
    <property type="term" value="F:zinc ion binding"/>
    <property type="evidence" value="ECO:0007669"/>
    <property type="project" value="UniProtKB-KW"/>
</dbReference>
<dbReference type="GO" id="GO:0035282">
    <property type="term" value="P:segmentation"/>
    <property type="evidence" value="ECO:0007669"/>
    <property type="project" value="UniProtKB-KW"/>
</dbReference>
<reference key="1">
    <citation type="journal article" date="1997" name="Syst. Biol.">
        <title>Multiple sources of character information and the phylogeny of Hawaiian Drosophilids.</title>
        <authorList>
            <person name="Baker R.H."/>
            <person name="DeSalle R."/>
        </authorList>
    </citation>
    <scope>NUCLEOTIDE SEQUENCE [GENOMIC DNA]</scope>
</reference>
<comment type="function">
    <text evidence="1">Gap class segmentation protein that controls development of head structures.</text>
</comment>
<comment type="subcellular location">
    <subcellularLocation>
        <location evidence="1">Nucleus</location>
    </subcellularLocation>
</comment>
<comment type="similarity">
    <text evidence="3">Belongs to the hunchback C2H2-type zinc-finger protein family.</text>
</comment>
<accession>O46258</accession>
<accession>O46259</accession>
<organism>
    <name type="scientific">Drosophila soonae</name>
    <name type="common">Fruit fly</name>
    <dbReference type="NCBI Taxonomy" id="58310"/>
    <lineage>
        <taxon>Eukaryota</taxon>
        <taxon>Metazoa</taxon>
        <taxon>Ecdysozoa</taxon>
        <taxon>Arthropoda</taxon>
        <taxon>Hexapoda</taxon>
        <taxon>Insecta</taxon>
        <taxon>Pterygota</taxon>
        <taxon>Neoptera</taxon>
        <taxon>Endopterygota</taxon>
        <taxon>Diptera</taxon>
        <taxon>Brachycera</taxon>
        <taxon>Muscomorpha</taxon>
        <taxon>Ephydroidea</taxon>
        <taxon>Drosophilidae</taxon>
        <taxon>Drosophila</taxon>
        <taxon>Hawaiian Drosophila</taxon>
        <taxon>modified mouthparts group incertae sedis</taxon>
    </lineage>
</organism>
<feature type="chain" id="PRO_0000046963" description="Protein hunchback">
    <location>
        <begin position="1" status="less than"/>
        <end position="159" status="greater than"/>
    </location>
</feature>
<feature type="region of interest" description="Disordered" evidence="2">
    <location>
        <begin position="18"/>
        <end position="49"/>
    </location>
</feature>
<feature type="region of interest" description="Disordered" evidence="2">
    <location>
        <begin position="119"/>
        <end position="159"/>
    </location>
</feature>
<feature type="compositionally biased region" description="Basic residues" evidence="2">
    <location>
        <begin position="18"/>
        <end position="34"/>
    </location>
</feature>
<feature type="compositionally biased region" description="Basic and acidic residues" evidence="2">
    <location>
        <begin position="140"/>
        <end position="159"/>
    </location>
</feature>
<feature type="non-consecutive residues" evidence="3">
    <location>
        <begin position="64"/>
        <end position="65"/>
    </location>
</feature>
<feature type="non-terminal residue">
    <location>
        <position position="1"/>
    </location>
</feature>
<feature type="non-terminal residue">
    <location>
        <position position="159"/>
    </location>
</feature>
<keyword id="KW-0217">Developmental protein</keyword>
<keyword id="KW-0238">DNA-binding</keyword>
<keyword id="KW-0302">Gap protein</keyword>
<keyword id="KW-0479">Metal-binding</keyword>
<keyword id="KW-0539">Nucleus</keyword>
<keyword id="KW-0677">Repeat</keyword>
<keyword id="KW-0862">Zinc</keyword>
<keyword id="KW-0863">Zinc-finger</keyword>
<name>HUNB_DROSO</name>
<gene>
    <name type="primary">hb</name>
</gene>
<proteinExistence type="inferred from homology"/>
<protein>
    <recommendedName>
        <fullName>Protein hunchback</fullName>
    </recommendedName>
</protein>